<protein>
    <recommendedName>
        <fullName evidence="1">Probable transcriptional regulatory protein SPN23F19460</fullName>
    </recommendedName>
</protein>
<accession>B8ZNM3</accession>
<gene>
    <name type="ordered locus">SPN23F19460</name>
</gene>
<evidence type="ECO:0000255" key="1">
    <source>
        <dbReference type="HAMAP-Rule" id="MF_00918"/>
    </source>
</evidence>
<organism>
    <name type="scientific">Streptococcus pneumoniae (strain ATCC 700669 / Spain 23F-1)</name>
    <dbReference type="NCBI Taxonomy" id="561276"/>
    <lineage>
        <taxon>Bacteria</taxon>
        <taxon>Bacillati</taxon>
        <taxon>Bacillota</taxon>
        <taxon>Bacilli</taxon>
        <taxon>Lactobacillales</taxon>
        <taxon>Streptococcaceae</taxon>
        <taxon>Streptococcus</taxon>
    </lineage>
</organism>
<comment type="subcellular location">
    <subcellularLocation>
        <location evidence="1">Cytoplasm</location>
    </subcellularLocation>
</comment>
<comment type="similarity">
    <text evidence="1">Belongs to the TACO1 family. YeeN subfamily.</text>
</comment>
<feature type="chain" id="PRO_1000200112" description="Probable transcriptional regulatory protein SPN23F19460">
    <location>
        <begin position="1"/>
        <end position="238"/>
    </location>
</feature>
<reference key="1">
    <citation type="journal article" date="2009" name="J. Bacteriol.">
        <title>Role of conjugative elements in the evolution of the multidrug-resistant pandemic clone Streptococcus pneumoniae Spain23F ST81.</title>
        <authorList>
            <person name="Croucher N.J."/>
            <person name="Walker D."/>
            <person name="Romero P."/>
            <person name="Lennard N."/>
            <person name="Paterson G.K."/>
            <person name="Bason N.C."/>
            <person name="Mitchell A.M."/>
            <person name="Quail M.A."/>
            <person name="Andrew P.W."/>
            <person name="Parkhill J."/>
            <person name="Bentley S.D."/>
            <person name="Mitchell T.J."/>
        </authorList>
    </citation>
    <scope>NUCLEOTIDE SEQUENCE [LARGE SCALE GENOMIC DNA]</scope>
    <source>
        <strain>ATCC 700669 / Spain 23F-1</strain>
    </source>
</reference>
<keyword id="KW-0963">Cytoplasm</keyword>
<keyword id="KW-0238">DNA-binding</keyword>
<keyword id="KW-0804">Transcription</keyword>
<keyword id="KW-0805">Transcription regulation</keyword>
<name>Y1946_STRPJ</name>
<dbReference type="EMBL" id="FM211187">
    <property type="protein sequence ID" value="CAR69698.1"/>
    <property type="molecule type" value="Genomic_DNA"/>
</dbReference>
<dbReference type="RefSeq" id="WP_000532876.1">
    <property type="nucleotide sequence ID" value="NC_011900.1"/>
</dbReference>
<dbReference type="SMR" id="B8ZNM3"/>
<dbReference type="KEGG" id="sne:SPN23F19460"/>
<dbReference type="HOGENOM" id="CLU_062974_2_0_9"/>
<dbReference type="GO" id="GO:0005829">
    <property type="term" value="C:cytosol"/>
    <property type="evidence" value="ECO:0007669"/>
    <property type="project" value="TreeGrafter"/>
</dbReference>
<dbReference type="GO" id="GO:0003677">
    <property type="term" value="F:DNA binding"/>
    <property type="evidence" value="ECO:0007669"/>
    <property type="project" value="UniProtKB-UniRule"/>
</dbReference>
<dbReference type="GO" id="GO:0006355">
    <property type="term" value="P:regulation of DNA-templated transcription"/>
    <property type="evidence" value="ECO:0007669"/>
    <property type="project" value="UniProtKB-UniRule"/>
</dbReference>
<dbReference type="FunFam" id="1.10.10.200:FF:000003">
    <property type="entry name" value="Probable transcriptional regulatory protein YeeN"/>
    <property type="match status" value="1"/>
</dbReference>
<dbReference type="FunFam" id="3.30.70.980:FF:000004">
    <property type="entry name" value="Probable transcriptional regulatory protein YeeN"/>
    <property type="match status" value="1"/>
</dbReference>
<dbReference type="Gene3D" id="1.10.10.200">
    <property type="match status" value="1"/>
</dbReference>
<dbReference type="Gene3D" id="3.30.70.980">
    <property type="match status" value="2"/>
</dbReference>
<dbReference type="HAMAP" id="MF_00693">
    <property type="entry name" value="Transcrip_reg_TACO1"/>
    <property type="match status" value="1"/>
</dbReference>
<dbReference type="HAMAP" id="MF_00918">
    <property type="entry name" value="Transcrip_reg_TACO1_YeeN"/>
    <property type="match status" value="1"/>
</dbReference>
<dbReference type="InterPro" id="IPR017856">
    <property type="entry name" value="Integrase-like_N"/>
</dbReference>
<dbReference type="InterPro" id="IPR048300">
    <property type="entry name" value="TACO1_YebC-like_2nd/3rd_dom"/>
</dbReference>
<dbReference type="InterPro" id="IPR049083">
    <property type="entry name" value="TACO1_YebC_N"/>
</dbReference>
<dbReference type="InterPro" id="IPR002876">
    <property type="entry name" value="Transcrip_reg_TACO1-like"/>
</dbReference>
<dbReference type="InterPro" id="IPR026564">
    <property type="entry name" value="Transcrip_reg_TACO1-like_dom3"/>
</dbReference>
<dbReference type="InterPro" id="IPR026562">
    <property type="entry name" value="Transcrip_reg_TACO1_YeeN"/>
</dbReference>
<dbReference type="InterPro" id="IPR029072">
    <property type="entry name" value="YebC-like"/>
</dbReference>
<dbReference type="NCBIfam" id="NF001030">
    <property type="entry name" value="PRK00110.1"/>
    <property type="match status" value="1"/>
</dbReference>
<dbReference type="NCBIfam" id="NF009044">
    <property type="entry name" value="PRK12378.1"/>
    <property type="match status" value="1"/>
</dbReference>
<dbReference type="NCBIfam" id="TIGR01033">
    <property type="entry name" value="YebC/PmpR family DNA-binding transcriptional regulator"/>
    <property type="match status" value="1"/>
</dbReference>
<dbReference type="PANTHER" id="PTHR12532">
    <property type="entry name" value="TRANSLATIONAL ACTIVATOR OF CYTOCHROME C OXIDASE 1"/>
    <property type="match status" value="1"/>
</dbReference>
<dbReference type="PANTHER" id="PTHR12532:SF0">
    <property type="entry name" value="TRANSLATIONAL ACTIVATOR OF CYTOCHROME C OXIDASE 1"/>
    <property type="match status" value="1"/>
</dbReference>
<dbReference type="Pfam" id="PF20772">
    <property type="entry name" value="TACO1_YebC_N"/>
    <property type="match status" value="1"/>
</dbReference>
<dbReference type="Pfam" id="PF01709">
    <property type="entry name" value="Transcrip_reg"/>
    <property type="match status" value="1"/>
</dbReference>
<dbReference type="SUPFAM" id="SSF75625">
    <property type="entry name" value="YebC-like"/>
    <property type="match status" value="1"/>
</dbReference>
<proteinExistence type="inferred from homology"/>
<sequence length="238" mass="25830">MGRKWANIVAKKTAKDGANSKVYAKFGVEIYVAAKKGDPDPESNSALKFVIDRAKQAQVPKHIIDKAIDKAKGNTDETFTEGRYEGFGPNGSMLIVDTLTSNVNRTAANVRAAFGKNGGNMGASGSVSYLFDNKGVIVFGGEDADAVFEQLLEADVDVDDVEAQEGTITVYTAPTDLHKAIVALRESGIEEFQVTELEMIPQSEVELSGEDLETFEKLYSVLEDDEDVQKIYTNVDGF</sequence>